<proteinExistence type="inferred from homology"/>
<keyword id="KW-1185">Reference proteome</keyword>
<keyword id="KW-0687">Ribonucleoprotein</keyword>
<keyword id="KW-0689">Ribosomal protein</keyword>
<dbReference type="EMBL" id="CP000316">
    <property type="protein sequence ID" value="ABE44611.1"/>
    <property type="molecule type" value="Genomic_DNA"/>
</dbReference>
<dbReference type="RefSeq" id="WP_011483609.1">
    <property type="nucleotide sequence ID" value="NC_007948.1"/>
</dbReference>
<dbReference type="SMR" id="Q12A31"/>
<dbReference type="STRING" id="296591.Bpro_2695"/>
<dbReference type="KEGG" id="pol:Bpro_2695"/>
<dbReference type="eggNOG" id="COG0052">
    <property type="taxonomic scope" value="Bacteria"/>
</dbReference>
<dbReference type="HOGENOM" id="CLU_040318_1_2_4"/>
<dbReference type="OrthoDB" id="9808036at2"/>
<dbReference type="Proteomes" id="UP000001983">
    <property type="component" value="Chromosome"/>
</dbReference>
<dbReference type="GO" id="GO:0022627">
    <property type="term" value="C:cytosolic small ribosomal subunit"/>
    <property type="evidence" value="ECO:0007669"/>
    <property type="project" value="TreeGrafter"/>
</dbReference>
<dbReference type="GO" id="GO:0003735">
    <property type="term" value="F:structural constituent of ribosome"/>
    <property type="evidence" value="ECO:0007669"/>
    <property type="project" value="InterPro"/>
</dbReference>
<dbReference type="GO" id="GO:0006412">
    <property type="term" value="P:translation"/>
    <property type="evidence" value="ECO:0007669"/>
    <property type="project" value="UniProtKB-UniRule"/>
</dbReference>
<dbReference type="CDD" id="cd01425">
    <property type="entry name" value="RPS2"/>
    <property type="match status" value="1"/>
</dbReference>
<dbReference type="FunFam" id="1.10.287.610:FF:000001">
    <property type="entry name" value="30S ribosomal protein S2"/>
    <property type="match status" value="1"/>
</dbReference>
<dbReference type="Gene3D" id="3.40.50.10490">
    <property type="entry name" value="Glucose-6-phosphate isomerase like protein, domain 1"/>
    <property type="match status" value="1"/>
</dbReference>
<dbReference type="Gene3D" id="1.10.287.610">
    <property type="entry name" value="Helix hairpin bin"/>
    <property type="match status" value="1"/>
</dbReference>
<dbReference type="HAMAP" id="MF_00291_B">
    <property type="entry name" value="Ribosomal_uS2_B"/>
    <property type="match status" value="1"/>
</dbReference>
<dbReference type="InterPro" id="IPR001865">
    <property type="entry name" value="Ribosomal_uS2"/>
</dbReference>
<dbReference type="InterPro" id="IPR005706">
    <property type="entry name" value="Ribosomal_uS2_bac/mit/plastid"/>
</dbReference>
<dbReference type="InterPro" id="IPR018130">
    <property type="entry name" value="Ribosomal_uS2_CS"/>
</dbReference>
<dbReference type="InterPro" id="IPR023591">
    <property type="entry name" value="Ribosomal_uS2_flav_dom_sf"/>
</dbReference>
<dbReference type="NCBIfam" id="TIGR01011">
    <property type="entry name" value="rpsB_bact"/>
    <property type="match status" value="1"/>
</dbReference>
<dbReference type="PANTHER" id="PTHR12534">
    <property type="entry name" value="30S RIBOSOMAL PROTEIN S2 PROKARYOTIC AND ORGANELLAR"/>
    <property type="match status" value="1"/>
</dbReference>
<dbReference type="PANTHER" id="PTHR12534:SF0">
    <property type="entry name" value="SMALL RIBOSOMAL SUBUNIT PROTEIN US2M"/>
    <property type="match status" value="1"/>
</dbReference>
<dbReference type="Pfam" id="PF00318">
    <property type="entry name" value="Ribosomal_S2"/>
    <property type="match status" value="1"/>
</dbReference>
<dbReference type="PRINTS" id="PR00395">
    <property type="entry name" value="RIBOSOMALS2"/>
</dbReference>
<dbReference type="SUPFAM" id="SSF52313">
    <property type="entry name" value="Ribosomal protein S2"/>
    <property type="match status" value="1"/>
</dbReference>
<dbReference type="PROSITE" id="PS00962">
    <property type="entry name" value="RIBOSOMAL_S2_1"/>
    <property type="match status" value="1"/>
</dbReference>
<name>RS2_POLSJ</name>
<evidence type="ECO:0000255" key="1">
    <source>
        <dbReference type="HAMAP-Rule" id="MF_00291"/>
    </source>
</evidence>
<evidence type="ECO:0000305" key="2"/>
<sequence>MSTSMREMLEAGVHFGHQTRFWNPKMAPYIFGHRNRIHIINLEKSLPMFQDAMKFAKQLSANRGTILMVGTKRQAREIVATEAKRAGVPYVDQRWLGGMLTNFKTVKTSIKRLKEMKAQQEAGLDSISKKEQLTFKREIEKLEKDIGGIQDMNALPDAIFVIDVGFHKIAILEAKKLGIPLIGVVDSNHSPIGIDYVIPGNDDSSKAVALYARGIADAILEGRANAVNDVVKAVSAESSDEFVEVENAAN</sequence>
<feature type="chain" id="PRO_1000004021" description="Small ribosomal subunit protein uS2">
    <location>
        <begin position="1"/>
        <end position="250"/>
    </location>
</feature>
<accession>Q12A31</accession>
<reference key="1">
    <citation type="journal article" date="2008" name="Appl. Environ. Microbiol.">
        <title>The genome of Polaromonas sp. strain JS666: insights into the evolution of a hydrocarbon- and xenobiotic-degrading bacterium, and features of relevance to biotechnology.</title>
        <authorList>
            <person name="Mattes T.E."/>
            <person name="Alexander A.K."/>
            <person name="Richardson P.M."/>
            <person name="Munk A.C."/>
            <person name="Han C.S."/>
            <person name="Stothard P."/>
            <person name="Coleman N.V."/>
        </authorList>
    </citation>
    <scope>NUCLEOTIDE SEQUENCE [LARGE SCALE GENOMIC DNA]</scope>
    <source>
        <strain>JS666 / ATCC BAA-500</strain>
    </source>
</reference>
<protein>
    <recommendedName>
        <fullName evidence="1">Small ribosomal subunit protein uS2</fullName>
    </recommendedName>
    <alternativeName>
        <fullName evidence="2">30S ribosomal protein S2</fullName>
    </alternativeName>
</protein>
<comment type="similarity">
    <text evidence="1">Belongs to the universal ribosomal protein uS2 family.</text>
</comment>
<gene>
    <name evidence="1" type="primary">rpsB</name>
    <name type="ordered locus">Bpro_2695</name>
</gene>
<organism>
    <name type="scientific">Polaromonas sp. (strain JS666 / ATCC BAA-500)</name>
    <dbReference type="NCBI Taxonomy" id="296591"/>
    <lineage>
        <taxon>Bacteria</taxon>
        <taxon>Pseudomonadati</taxon>
        <taxon>Pseudomonadota</taxon>
        <taxon>Betaproteobacteria</taxon>
        <taxon>Burkholderiales</taxon>
        <taxon>Comamonadaceae</taxon>
        <taxon>Polaromonas</taxon>
    </lineage>
</organism>